<comment type="function">
    <text evidence="1">Factor IX is a vitamin K-dependent plasma protein that participates in the intrinsic pathway of blood coagulation by converting factor X to its active form in the presence of Ca(2+) ions, phospholipids, and factor VIIIa.</text>
</comment>
<comment type="catalytic activity">
    <reaction evidence="1">
        <text>Selective cleavage of Arg-|-Ile bond in factor X to form factor Xa.</text>
        <dbReference type="EC" id="3.4.21.22"/>
    </reaction>
</comment>
<comment type="subunit">
    <text evidence="1">Heterodimer of a light chain and a heavy chain; disulfide-linked. Interacts (inactive and activated) with F11 (activated) in calcium-dependent manner. Interacts with SERPINC1.</text>
</comment>
<comment type="subcellular location">
    <subcellularLocation>
        <location evidence="1">Secreted</location>
    </subcellularLocation>
</comment>
<comment type="PTM">
    <text evidence="1">Activated by factor XIa, which excises the activation peptide. The propeptide can also be removed by snake venom protease (By similarity). Activated by coagulation factor VIIa-tissue factor (F7-F3) complex in calcium-dependent manner (By similarity).</text>
</comment>
<comment type="similarity">
    <text evidence="3">Belongs to the peptidase S1 family.</text>
</comment>
<sequence>RVSIPSVSKEHNRANAIFSRMGYVNFTDDETIWDDNDDDETIWDNSTESTKPSDEFFRVVGGEDAKPGQFPWQVLLNGETEAFCGGSIVNEKWIVTAAHCILPGIKIEVVAGKHNIEKKEDTEQRRNVTQIILHHSYNASFNKYSHDIALLELDKPLSLNSYVTPICIANREYTNIFLKFGAGYVSGWGKLFSQGRTASILQYLRVPLVDRATCLRSTKFTIYNNMFCAGFHEGGRDSCQGDSGGPHVTEVEGTNFLTGIISWGEECAMKGKYGIYTKVSRYVNW</sequence>
<name>FA9_CAVPO</name>
<accession>P16295</accession>
<organism>
    <name type="scientific">Cavia porcellus</name>
    <name type="common">Guinea pig</name>
    <dbReference type="NCBI Taxonomy" id="10141"/>
    <lineage>
        <taxon>Eukaryota</taxon>
        <taxon>Metazoa</taxon>
        <taxon>Chordata</taxon>
        <taxon>Craniata</taxon>
        <taxon>Vertebrata</taxon>
        <taxon>Euteleostomi</taxon>
        <taxon>Mammalia</taxon>
        <taxon>Eutheria</taxon>
        <taxon>Euarchontoglires</taxon>
        <taxon>Glires</taxon>
        <taxon>Rodentia</taxon>
        <taxon>Hystricomorpha</taxon>
        <taxon>Caviidae</taxon>
        <taxon>Cavia</taxon>
    </lineage>
</organism>
<protein>
    <recommendedName>
        <fullName>Coagulation factor IX</fullName>
        <ecNumber evidence="1">3.4.21.22</ecNumber>
    </recommendedName>
    <alternativeName>
        <fullName>Christmas factor</fullName>
    </alternativeName>
</protein>
<keyword id="KW-0094">Blood coagulation</keyword>
<keyword id="KW-0106">Calcium</keyword>
<keyword id="KW-1015">Disulfide bond</keyword>
<keyword id="KW-0325">Glycoprotein</keyword>
<keyword id="KW-0356">Hemostasis</keyword>
<keyword id="KW-0378">Hydrolase</keyword>
<keyword id="KW-0479">Metal-binding</keyword>
<keyword id="KW-0597">Phosphoprotein</keyword>
<keyword id="KW-0645">Protease</keyword>
<keyword id="KW-1185">Reference proteome</keyword>
<keyword id="KW-0964">Secreted</keyword>
<keyword id="KW-0720">Serine protease</keyword>
<keyword id="KW-0765">Sulfation</keyword>
<proteinExistence type="evidence at transcript level"/>
<gene>
    <name type="primary">F9</name>
</gene>
<dbReference type="EC" id="3.4.21.22" evidence="1"/>
<dbReference type="EMBL" id="M26237">
    <property type="protein sequence ID" value="AAA37037.1"/>
    <property type="molecule type" value="mRNA"/>
</dbReference>
<dbReference type="PIR" id="I48144">
    <property type="entry name" value="I48144"/>
</dbReference>
<dbReference type="SMR" id="P16295"/>
<dbReference type="STRING" id="10141.ENSCPOP00000016267"/>
<dbReference type="MEROPS" id="S01.214"/>
<dbReference type="GlyCosmos" id="P16295">
    <property type="glycosylation" value="6 sites, No reported glycans"/>
</dbReference>
<dbReference type="eggNOG" id="ENOG502QUEV">
    <property type="taxonomic scope" value="Eukaryota"/>
</dbReference>
<dbReference type="HOGENOM" id="CLU_006842_0_4_1"/>
<dbReference type="InParanoid" id="P16295"/>
<dbReference type="Proteomes" id="UP000005447">
    <property type="component" value="Unassembled WGS sequence"/>
</dbReference>
<dbReference type="GO" id="GO:0005615">
    <property type="term" value="C:extracellular space"/>
    <property type="evidence" value="ECO:0000250"/>
    <property type="project" value="UniProtKB"/>
</dbReference>
<dbReference type="GO" id="GO:0005509">
    <property type="term" value="F:calcium ion binding"/>
    <property type="evidence" value="ECO:0000250"/>
    <property type="project" value="UniProtKB"/>
</dbReference>
<dbReference type="GO" id="GO:0004175">
    <property type="term" value="F:endopeptidase activity"/>
    <property type="evidence" value="ECO:0000250"/>
    <property type="project" value="UniProtKB"/>
</dbReference>
<dbReference type="GO" id="GO:0004252">
    <property type="term" value="F:serine-type endopeptidase activity"/>
    <property type="evidence" value="ECO:0007669"/>
    <property type="project" value="UniProtKB-EC"/>
</dbReference>
<dbReference type="GO" id="GO:0007596">
    <property type="term" value="P:blood coagulation"/>
    <property type="evidence" value="ECO:0000250"/>
    <property type="project" value="UniProtKB"/>
</dbReference>
<dbReference type="GO" id="GO:0006508">
    <property type="term" value="P:proteolysis"/>
    <property type="evidence" value="ECO:0000250"/>
    <property type="project" value="UniProtKB"/>
</dbReference>
<dbReference type="GO" id="GO:0031638">
    <property type="term" value="P:zymogen activation"/>
    <property type="evidence" value="ECO:0000250"/>
    <property type="project" value="UniProtKB"/>
</dbReference>
<dbReference type="CDD" id="cd00190">
    <property type="entry name" value="Tryp_SPc"/>
    <property type="match status" value="1"/>
</dbReference>
<dbReference type="FunFam" id="2.40.10.10:FF:000013">
    <property type="entry name" value="Coagulation factor X"/>
    <property type="match status" value="1"/>
</dbReference>
<dbReference type="Gene3D" id="2.40.10.10">
    <property type="entry name" value="Trypsin-like serine proteases"/>
    <property type="match status" value="2"/>
</dbReference>
<dbReference type="InterPro" id="IPR009003">
    <property type="entry name" value="Peptidase_S1_PA"/>
</dbReference>
<dbReference type="InterPro" id="IPR043504">
    <property type="entry name" value="Peptidase_S1_PA_chymotrypsin"/>
</dbReference>
<dbReference type="InterPro" id="IPR001314">
    <property type="entry name" value="Peptidase_S1A"/>
</dbReference>
<dbReference type="InterPro" id="IPR050127">
    <property type="entry name" value="Serine_Proteases_S1"/>
</dbReference>
<dbReference type="InterPro" id="IPR001254">
    <property type="entry name" value="Trypsin_dom"/>
</dbReference>
<dbReference type="InterPro" id="IPR018114">
    <property type="entry name" value="TRYPSIN_HIS"/>
</dbReference>
<dbReference type="InterPro" id="IPR033116">
    <property type="entry name" value="TRYPSIN_SER"/>
</dbReference>
<dbReference type="PANTHER" id="PTHR24264:SF65">
    <property type="entry name" value="SRCR DOMAIN-CONTAINING PROTEIN"/>
    <property type="match status" value="1"/>
</dbReference>
<dbReference type="PANTHER" id="PTHR24264">
    <property type="entry name" value="TRYPSIN-RELATED"/>
    <property type="match status" value="1"/>
</dbReference>
<dbReference type="Pfam" id="PF00089">
    <property type="entry name" value="Trypsin"/>
    <property type="match status" value="1"/>
</dbReference>
<dbReference type="PRINTS" id="PR00722">
    <property type="entry name" value="CHYMOTRYPSIN"/>
</dbReference>
<dbReference type="SMART" id="SM00020">
    <property type="entry name" value="Tryp_SPc"/>
    <property type="match status" value="1"/>
</dbReference>
<dbReference type="SUPFAM" id="SSF50494">
    <property type="entry name" value="Trypsin-like serine proteases"/>
    <property type="match status" value="1"/>
</dbReference>
<dbReference type="PROSITE" id="PS50240">
    <property type="entry name" value="TRYPSIN_DOM"/>
    <property type="match status" value="1"/>
</dbReference>
<dbReference type="PROSITE" id="PS00134">
    <property type="entry name" value="TRYPSIN_HIS"/>
    <property type="match status" value="1"/>
</dbReference>
<dbReference type="PROSITE" id="PS00135">
    <property type="entry name" value="TRYPSIN_SER"/>
    <property type="match status" value="1"/>
</dbReference>
<evidence type="ECO:0000250" key="1">
    <source>
        <dbReference type="UniProtKB" id="P00740"/>
    </source>
</evidence>
<evidence type="ECO:0000255" key="2"/>
<evidence type="ECO:0000255" key="3">
    <source>
        <dbReference type="PROSITE-ProRule" id="PRU00274"/>
    </source>
</evidence>
<feature type="chain" id="PRO_0000088683" description="Coagulation factor IX">
    <location>
        <begin position="1" status="less than"/>
        <end position="285" status="greater than"/>
    </location>
</feature>
<feature type="domain" description="Peptidase S1" evidence="3">
    <location>
        <begin position="59"/>
        <end position="285" status="greater than"/>
    </location>
</feature>
<feature type="active site" description="Charge relay system" evidence="1">
    <location>
        <position position="99"/>
    </location>
</feature>
<feature type="active site" description="Charge relay system" evidence="1">
    <location>
        <position position="147"/>
    </location>
</feature>
<feature type="active site" description="Charge relay system" evidence="1">
    <location>
        <position position="243"/>
    </location>
</feature>
<feature type="binding site" evidence="1">
    <location>
        <position position="115"/>
    </location>
    <ligand>
        <name>Ca(2+)</name>
        <dbReference type="ChEBI" id="CHEBI:29108"/>
    </ligand>
</feature>
<feature type="binding site" evidence="1">
    <location>
        <position position="120"/>
    </location>
    <ligand>
        <name>Ca(2+)</name>
        <dbReference type="ChEBI" id="CHEBI:29108"/>
    </ligand>
</feature>
<feature type="binding site" evidence="1">
    <location>
        <position position="123"/>
    </location>
    <ligand>
        <name>Ca(2+)</name>
        <dbReference type="ChEBI" id="CHEBI:29108"/>
    </ligand>
</feature>
<feature type="site" description="Cleavage; by factor XIa" evidence="1">
    <location>
        <begin position="13"/>
        <end position="14"/>
    </location>
</feature>
<feature type="site" description="Cleavage; by factor XIa" evidence="1">
    <location>
        <begin position="58"/>
        <end position="59"/>
    </location>
</feature>
<feature type="modified residue" description="Sulfotyrosine" evidence="1">
    <location>
        <position position="23"/>
    </location>
</feature>
<feature type="modified residue" description="Phosphothreonine; alternate" evidence="1">
    <location>
        <position position="27"/>
    </location>
</feature>
<feature type="glycosylation site" description="N-linked (GlcNAc...) asparagine" evidence="2">
    <location>
        <position position="25"/>
    </location>
</feature>
<feature type="glycosylation site" description="O-linked (GalNAc...) threonine; alternate" evidence="1">
    <location>
        <position position="27"/>
    </location>
</feature>
<feature type="glycosylation site" description="N-linked (GlcNAc...) asparagine" evidence="2">
    <location>
        <position position="45"/>
    </location>
</feature>
<feature type="glycosylation site" description="O-linked (GalNAc...) threonine" evidence="1">
    <location>
        <position position="47"/>
    </location>
</feature>
<feature type="glycosylation site" description="N-linked (GlcNAc...) asparagine" evidence="2">
    <location>
        <position position="127"/>
    </location>
</feature>
<feature type="glycosylation site" description="N-linked (GlcNAc...) asparagine" evidence="2">
    <location>
        <position position="138"/>
    </location>
</feature>
<feature type="disulfide bond" evidence="1">
    <location>
        <begin position="84"/>
        <end position="100"/>
    </location>
</feature>
<feature type="disulfide bond" evidence="1">
    <location>
        <begin position="214"/>
        <end position="228"/>
    </location>
</feature>
<feature type="disulfide bond" evidence="1">
    <location>
        <begin position="239"/>
        <end position="267"/>
    </location>
</feature>
<feature type="non-terminal residue">
    <location>
        <position position="1"/>
    </location>
</feature>
<feature type="non-terminal residue">
    <location>
        <position position="285"/>
    </location>
</feature>
<reference key="1">
    <citation type="journal article" date="1990" name="Genomics">
        <title>Direct sequencing of the activation peptide and the catalytic domain of the factor IX gene in six species.</title>
        <authorList>
            <person name="Sarkar G."/>
            <person name="Koeberl D.D."/>
            <person name="Sommer S.S."/>
        </authorList>
    </citation>
    <scope>NUCLEOTIDE SEQUENCE [MRNA]</scope>
</reference>